<protein>
    <recommendedName>
        <fullName evidence="1">Cysteine desulfurase IscS</fullName>
        <ecNumber evidence="1">2.8.1.7</ecNumber>
    </recommendedName>
</protein>
<feature type="chain" id="PRO_1000205173" description="Cysteine desulfurase IscS">
    <location>
        <begin position="1"/>
        <end position="410"/>
    </location>
</feature>
<feature type="active site" description="Cysteine persulfide intermediate" evidence="1">
    <location>
        <position position="334"/>
    </location>
</feature>
<feature type="binding site" evidence="1">
    <location>
        <begin position="80"/>
        <end position="81"/>
    </location>
    <ligand>
        <name>pyridoxal 5'-phosphate</name>
        <dbReference type="ChEBI" id="CHEBI:597326"/>
    </ligand>
</feature>
<feature type="binding site" evidence="1">
    <location>
        <position position="160"/>
    </location>
    <ligand>
        <name>pyridoxal 5'-phosphate</name>
        <dbReference type="ChEBI" id="CHEBI:597326"/>
    </ligand>
</feature>
<feature type="binding site" evidence="1">
    <location>
        <position position="188"/>
    </location>
    <ligand>
        <name>pyridoxal 5'-phosphate</name>
        <dbReference type="ChEBI" id="CHEBI:597326"/>
    </ligand>
</feature>
<feature type="binding site" evidence="1">
    <location>
        <begin position="208"/>
        <end position="210"/>
    </location>
    <ligand>
        <name>pyridoxal 5'-phosphate</name>
        <dbReference type="ChEBI" id="CHEBI:597326"/>
    </ligand>
</feature>
<feature type="binding site" evidence="1">
    <location>
        <position position="248"/>
    </location>
    <ligand>
        <name>pyridoxal 5'-phosphate</name>
        <dbReference type="ChEBI" id="CHEBI:597326"/>
    </ligand>
</feature>
<feature type="binding site" description="via persulfide group" evidence="1">
    <location>
        <position position="334"/>
    </location>
    <ligand>
        <name>[2Fe-2S] cluster</name>
        <dbReference type="ChEBI" id="CHEBI:190135"/>
        <note>ligand shared with IscU</note>
    </ligand>
</feature>
<feature type="modified residue" description="N6-(pyridoxal phosphate)lysine" evidence="1">
    <location>
        <position position="211"/>
    </location>
</feature>
<sequence length="410" mass="45470">MNPQLNNLTLPIYMDYQATTPIDPRVMEAMLPYFTTKFGNPHSRSHSFGWEAENAVEEARSMVAKLIGADTKEIIFTSGATESNNLAIKGIAKFYSNKKNHIITVVSEHKCVLDACRHLEQEGIKITYLPIKPNGIIDLETLKNAITDQTMLVSVMVVNNEIGVVQPLKEIGQICREKGVFFHSDIAQGFGKIPIDVNAFNIDLASISGHKIYGPKGIGALYVRKKPRVRVTPLINGGGQERGIRSGTLPTPLIVGLGMAAEIAYSEMEKDTKHINYLFDRFLNNIHKRISKVYLNGDKNQRYKGNLNLSFAGVEGESMILAIKDLAVSSGSACTSASLEPSYVLRSMGIGEELAHTAIRFGIGRFTTEQEVDYAVNLICSKIDKLRELSPLWEMMQEGIDLKKIKWAVH</sequence>
<keyword id="KW-0001">2Fe-2S</keyword>
<keyword id="KW-0963">Cytoplasm</keyword>
<keyword id="KW-0408">Iron</keyword>
<keyword id="KW-0411">Iron-sulfur</keyword>
<keyword id="KW-0479">Metal-binding</keyword>
<keyword id="KW-0663">Pyridoxal phosphate</keyword>
<keyword id="KW-0808">Transferase</keyword>
<comment type="function">
    <text evidence="1">Master enzyme that delivers sulfur to a number of partners involved in Fe-S cluster assembly, tRNA modification or cofactor biosynthesis. Catalyzes the removal of elemental sulfur atoms from cysteine to produce alanine. Functions as a sulfur delivery protein for Fe-S cluster synthesis onto IscU, an Fe-S scaffold assembly protein, as well as other S acceptor proteins.</text>
</comment>
<comment type="catalytic activity">
    <reaction evidence="1">
        <text>(sulfur carrier)-H + L-cysteine = (sulfur carrier)-SH + L-alanine</text>
        <dbReference type="Rhea" id="RHEA:43892"/>
        <dbReference type="Rhea" id="RHEA-COMP:14737"/>
        <dbReference type="Rhea" id="RHEA-COMP:14739"/>
        <dbReference type="ChEBI" id="CHEBI:29917"/>
        <dbReference type="ChEBI" id="CHEBI:35235"/>
        <dbReference type="ChEBI" id="CHEBI:57972"/>
        <dbReference type="ChEBI" id="CHEBI:64428"/>
        <dbReference type="EC" id="2.8.1.7"/>
    </reaction>
</comment>
<comment type="cofactor">
    <cofactor evidence="1">
        <name>pyridoxal 5'-phosphate</name>
        <dbReference type="ChEBI" id="CHEBI:597326"/>
    </cofactor>
</comment>
<comment type="pathway">
    <text evidence="1">Cofactor biosynthesis; iron-sulfur cluster biosynthesis.</text>
</comment>
<comment type="subunit">
    <text evidence="1">Homodimer. Forms a heterotetramer with IscU, interacts with other sulfur acceptors.</text>
</comment>
<comment type="subcellular location">
    <subcellularLocation>
        <location evidence="1">Cytoplasm</location>
    </subcellularLocation>
</comment>
<comment type="similarity">
    <text evidence="1">Belongs to the class-V pyridoxal-phosphate-dependent aminotransferase family. NifS/IscS subfamily.</text>
</comment>
<accession>C3PNQ8</accession>
<name>ISCS_RICAE</name>
<gene>
    <name evidence="1" type="primary">iscS</name>
    <name type="ordered locus">RAF_ORF0676</name>
</gene>
<organism>
    <name type="scientific">Rickettsia africae (strain ESF-5)</name>
    <dbReference type="NCBI Taxonomy" id="347255"/>
    <lineage>
        <taxon>Bacteria</taxon>
        <taxon>Pseudomonadati</taxon>
        <taxon>Pseudomonadota</taxon>
        <taxon>Alphaproteobacteria</taxon>
        <taxon>Rickettsiales</taxon>
        <taxon>Rickettsiaceae</taxon>
        <taxon>Rickettsieae</taxon>
        <taxon>Rickettsia</taxon>
        <taxon>spotted fever group</taxon>
    </lineage>
</organism>
<evidence type="ECO:0000255" key="1">
    <source>
        <dbReference type="HAMAP-Rule" id="MF_00331"/>
    </source>
</evidence>
<proteinExistence type="inferred from homology"/>
<reference key="1">
    <citation type="journal article" date="2009" name="BMC Genomics">
        <title>Analysis of the Rickettsia africae genome reveals that virulence acquisition in Rickettsia species may be explained by genome reduction.</title>
        <authorList>
            <person name="Fournier P.-E."/>
            <person name="El Karkouri K."/>
            <person name="Leroy Q."/>
            <person name="Robert C."/>
            <person name="Giumelli B."/>
            <person name="Renesto P."/>
            <person name="Socolovschi C."/>
            <person name="Parola P."/>
            <person name="Audic S."/>
            <person name="Raoult D."/>
        </authorList>
    </citation>
    <scope>NUCLEOTIDE SEQUENCE [LARGE SCALE GENOMIC DNA]</scope>
    <source>
        <strain>ESF-5</strain>
    </source>
</reference>
<dbReference type="EC" id="2.8.1.7" evidence="1"/>
<dbReference type="EMBL" id="CP001612">
    <property type="protein sequence ID" value="ACP53568.1"/>
    <property type="molecule type" value="Genomic_DNA"/>
</dbReference>
<dbReference type="RefSeq" id="WP_012719768.1">
    <property type="nucleotide sequence ID" value="NC_012633.1"/>
</dbReference>
<dbReference type="SMR" id="C3PNQ8"/>
<dbReference type="KEGG" id="raf:RAF_ORF0676"/>
<dbReference type="HOGENOM" id="CLU_003433_0_2_5"/>
<dbReference type="UniPathway" id="UPA00266"/>
<dbReference type="Proteomes" id="UP000002305">
    <property type="component" value="Chromosome"/>
</dbReference>
<dbReference type="GO" id="GO:1990221">
    <property type="term" value="C:L-cysteine desulfurase complex"/>
    <property type="evidence" value="ECO:0007669"/>
    <property type="project" value="UniProtKB-ARBA"/>
</dbReference>
<dbReference type="GO" id="GO:0051537">
    <property type="term" value="F:2 iron, 2 sulfur cluster binding"/>
    <property type="evidence" value="ECO:0007669"/>
    <property type="project" value="UniProtKB-UniRule"/>
</dbReference>
<dbReference type="GO" id="GO:0031071">
    <property type="term" value="F:cysteine desulfurase activity"/>
    <property type="evidence" value="ECO:0007669"/>
    <property type="project" value="UniProtKB-UniRule"/>
</dbReference>
<dbReference type="GO" id="GO:0046872">
    <property type="term" value="F:metal ion binding"/>
    <property type="evidence" value="ECO:0007669"/>
    <property type="project" value="UniProtKB-KW"/>
</dbReference>
<dbReference type="GO" id="GO:0030170">
    <property type="term" value="F:pyridoxal phosphate binding"/>
    <property type="evidence" value="ECO:0007669"/>
    <property type="project" value="UniProtKB-UniRule"/>
</dbReference>
<dbReference type="GO" id="GO:0044571">
    <property type="term" value="P:[2Fe-2S] cluster assembly"/>
    <property type="evidence" value="ECO:0007669"/>
    <property type="project" value="UniProtKB-UniRule"/>
</dbReference>
<dbReference type="FunFam" id="3.40.640.10:FF:000003">
    <property type="entry name" value="Cysteine desulfurase IscS"/>
    <property type="match status" value="1"/>
</dbReference>
<dbReference type="FunFam" id="3.90.1150.10:FF:000002">
    <property type="entry name" value="Cysteine desulfurase IscS"/>
    <property type="match status" value="1"/>
</dbReference>
<dbReference type="Gene3D" id="3.90.1150.10">
    <property type="entry name" value="Aspartate Aminotransferase, domain 1"/>
    <property type="match status" value="1"/>
</dbReference>
<dbReference type="Gene3D" id="3.40.640.10">
    <property type="entry name" value="Type I PLP-dependent aspartate aminotransferase-like (Major domain)"/>
    <property type="match status" value="1"/>
</dbReference>
<dbReference type="HAMAP" id="MF_00331">
    <property type="entry name" value="Cys_desulf_IscS"/>
    <property type="match status" value="1"/>
</dbReference>
<dbReference type="InterPro" id="IPR000192">
    <property type="entry name" value="Aminotrans_V_dom"/>
</dbReference>
<dbReference type="InterPro" id="IPR020578">
    <property type="entry name" value="Aminotrans_V_PyrdxlP_BS"/>
</dbReference>
<dbReference type="InterPro" id="IPR010240">
    <property type="entry name" value="Cys_deSase_IscS"/>
</dbReference>
<dbReference type="InterPro" id="IPR016454">
    <property type="entry name" value="Cysteine_dSase"/>
</dbReference>
<dbReference type="InterPro" id="IPR015424">
    <property type="entry name" value="PyrdxlP-dep_Trfase"/>
</dbReference>
<dbReference type="InterPro" id="IPR015421">
    <property type="entry name" value="PyrdxlP-dep_Trfase_major"/>
</dbReference>
<dbReference type="InterPro" id="IPR015422">
    <property type="entry name" value="PyrdxlP-dep_Trfase_small"/>
</dbReference>
<dbReference type="NCBIfam" id="TIGR02006">
    <property type="entry name" value="IscS"/>
    <property type="match status" value="1"/>
</dbReference>
<dbReference type="NCBIfam" id="NF002806">
    <property type="entry name" value="PRK02948.1"/>
    <property type="match status" value="1"/>
</dbReference>
<dbReference type="NCBIfam" id="NF010611">
    <property type="entry name" value="PRK14012.1"/>
    <property type="match status" value="1"/>
</dbReference>
<dbReference type="PANTHER" id="PTHR11601:SF34">
    <property type="entry name" value="CYSTEINE DESULFURASE"/>
    <property type="match status" value="1"/>
</dbReference>
<dbReference type="PANTHER" id="PTHR11601">
    <property type="entry name" value="CYSTEINE DESULFURYLASE FAMILY MEMBER"/>
    <property type="match status" value="1"/>
</dbReference>
<dbReference type="Pfam" id="PF00266">
    <property type="entry name" value="Aminotran_5"/>
    <property type="match status" value="1"/>
</dbReference>
<dbReference type="PIRSF" id="PIRSF005572">
    <property type="entry name" value="NifS"/>
    <property type="match status" value="1"/>
</dbReference>
<dbReference type="SUPFAM" id="SSF53383">
    <property type="entry name" value="PLP-dependent transferases"/>
    <property type="match status" value="1"/>
</dbReference>
<dbReference type="PROSITE" id="PS00595">
    <property type="entry name" value="AA_TRANSFER_CLASS_5"/>
    <property type="match status" value="1"/>
</dbReference>